<gene>
    <name evidence="1" type="primary">psbT</name>
</gene>
<feature type="chain" id="PRO_0000276318" description="Photosystem II reaction center protein T">
    <location>
        <begin position="1"/>
        <end position="35"/>
    </location>
</feature>
<feature type="transmembrane region" description="Helical" evidence="1">
    <location>
        <begin position="3"/>
        <end position="23"/>
    </location>
</feature>
<geneLocation type="chloroplast"/>
<accession>Q0ZIZ2</accession>
<evidence type="ECO:0000255" key="1">
    <source>
        <dbReference type="HAMAP-Rule" id="MF_00808"/>
    </source>
</evidence>
<reference key="1">
    <citation type="journal article" date="2006" name="BMC Evol. Biol.">
        <title>Phylogenetic analyses of Vitis (Vitaceae) based on complete chloroplast genome sequences: effects of taxon sampling and phylogenetic methods on resolving relationships among rosids.</title>
        <authorList>
            <person name="Jansen R.K."/>
            <person name="Kaittanis C."/>
            <person name="Lee S.-B."/>
            <person name="Saski C."/>
            <person name="Tomkins J."/>
            <person name="Alverson A.J."/>
            <person name="Daniell H."/>
        </authorList>
    </citation>
    <scope>NUCLEOTIDE SEQUENCE [LARGE SCALE GENOMIC DNA]</scope>
    <source>
        <strain>cv. Maxxa</strain>
    </source>
</reference>
<organism>
    <name type="scientific">Vitis vinifera</name>
    <name type="common">Grape</name>
    <dbReference type="NCBI Taxonomy" id="29760"/>
    <lineage>
        <taxon>Eukaryota</taxon>
        <taxon>Viridiplantae</taxon>
        <taxon>Streptophyta</taxon>
        <taxon>Embryophyta</taxon>
        <taxon>Tracheophyta</taxon>
        <taxon>Spermatophyta</taxon>
        <taxon>Magnoliopsida</taxon>
        <taxon>eudicotyledons</taxon>
        <taxon>Gunneridae</taxon>
        <taxon>Pentapetalae</taxon>
        <taxon>rosids</taxon>
        <taxon>Vitales</taxon>
        <taxon>Vitaceae</taxon>
        <taxon>Viteae</taxon>
        <taxon>Vitis</taxon>
    </lineage>
</organism>
<keyword id="KW-0150">Chloroplast</keyword>
<keyword id="KW-0472">Membrane</keyword>
<keyword id="KW-0602">Photosynthesis</keyword>
<keyword id="KW-0604">Photosystem II</keyword>
<keyword id="KW-0934">Plastid</keyword>
<keyword id="KW-1185">Reference proteome</keyword>
<keyword id="KW-0793">Thylakoid</keyword>
<keyword id="KW-0812">Transmembrane</keyword>
<keyword id="KW-1133">Transmembrane helix</keyword>
<dbReference type="EMBL" id="DQ424856">
    <property type="protein sequence ID" value="ABE47560.1"/>
    <property type="molecule type" value="Genomic_DNA"/>
</dbReference>
<dbReference type="RefSeq" id="YP_567104.1">
    <property type="nucleotide sequence ID" value="NC_007957.1"/>
</dbReference>
<dbReference type="SMR" id="Q0ZIZ2"/>
<dbReference type="FunCoup" id="Q0ZIZ2">
    <property type="interactions" value="47"/>
</dbReference>
<dbReference type="STRING" id="29760.Q0ZIZ2"/>
<dbReference type="GeneID" id="4025126"/>
<dbReference type="KEGG" id="vvi:4025126"/>
<dbReference type="InParanoid" id="Q0ZIZ2"/>
<dbReference type="OrthoDB" id="750047at71240"/>
<dbReference type="Proteomes" id="UP000009183">
    <property type="component" value="Chloroplast"/>
</dbReference>
<dbReference type="GO" id="GO:0009535">
    <property type="term" value="C:chloroplast thylakoid membrane"/>
    <property type="evidence" value="ECO:0007669"/>
    <property type="project" value="UniProtKB-SubCell"/>
</dbReference>
<dbReference type="GO" id="GO:0009539">
    <property type="term" value="C:photosystem II reaction center"/>
    <property type="evidence" value="ECO:0007669"/>
    <property type="project" value="InterPro"/>
</dbReference>
<dbReference type="GO" id="GO:0015979">
    <property type="term" value="P:photosynthesis"/>
    <property type="evidence" value="ECO:0007669"/>
    <property type="project" value="UniProtKB-UniRule"/>
</dbReference>
<dbReference type="HAMAP" id="MF_00808">
    <property type="entry name" value="PSII_PsbT"/>
    <property type="match status" value="1"/>
</dbReference>
<dbReference type="InterPro" id="IPR001743">
    <property type="entry name" value="PSII_PsbT"/>
</dbReference>
<dbReference type="InterPro" id="IPR037268">
    <property type="entry name" value="PSII_PsbT_sf"/>
</dbReference>
<dbReference type="PANTHER" id="PTHR36411">
    <property type="match status" value="1"/>
</dbReference>
<dbReference type="PANTHER" id="PTHR36411:SF2">
    <property type="entry name" value="PHOTOSYSTEM II REACTION CENTER PROTEIN T"/>
    <property type="match status" value="1"/>
</dbReference>
<dbReference type="Pfam" id="PF01405">
    <property type="entry name" value="PsbT"/>
    <property type="match status" value="1"/>
</dbReference>
<dbReference type="SUPFAM" id="SSF161029">
    <property type="entry name" value="Photosystem II reaction center protein T, PsbT"/>
    <property type="match status" value="1"/>
</dbReference>
<proteinExistence type="inferred from homology"/>
<sequence>MEALVYTFLLVSTLGIIFFAIFFREPPKVPTKKVK</sequence>
<protein>
    <recommendedName>
        <fullName evidence="1">Photosystem II reaction center protein T</fullName>
        <shortName evidence="1">PSII-T</shortName>
    </recommendedName>
</protein>
<name>PSBT_VITVI</name>
<comment type="function">
    <text evidence="1">Found at the monomer-monomer interface of the photosystem II (PS II) dimer, plays a role in assembly and dimerization of PSII. PSII is a light-driven water plastoquinone oxidoreductase, using light energy to abstract electrons from H(2)O, generating a proton gradient subsequently used for ATP formation.</text>
</comment>
<comment type="subunit">
    <text evidence="1">PSII is composed of 1 copy each of membrane proteins PsbA, PsbB, PsbC, PsbD, PsbE, PsbF, PsbH, PsbI, PsbJ, PsbK, PsbL, PsbM, PsbT, PsbY, PsbZ, Psb30/Ycf12, at least 3 peripheral proteins of the oxygen-evolving complex and a large number of cofactors. It forms dimeric complexes.</text>
</comment>
<comment type="subcellular location">
    <subcellularLocation>
        <location evidence="1">Plastid</location>
        <location evidence="1">Chloroplast thylakoid membrane</location>
        <topology evidence="1">Single-pass membrane protein</topology>
    </subcellularLocation>
</comment>
<comment type="similarity">
    <text evidence="1">Belongs to the PsbT family.</text>
</comment>